<comment type="function">
    <text evidence="1">Catalyzes the condensation reaction of fatty acid synthesis by the addition to an acyl acceptor of two carbons from malonyl-ACP. Catalyzes the first condensation reaction which initiates fatty acid synthesis and may therefore play a role in governing the total rate of fatty acid production. Possesses both acetoacetyl-ACP synthase and acetyl transacylase activities. Its substrate specificity determines the biosynthesis of branched-chain and/or straight-chain of fatty acids.</text>
</comment>
<comment type="catalytic activity">
    <reaction evidence="1">
        <text>malonyl-[ACP] + acetyl-CoA + H(+) = 3-oxobutanoyl-[ACP] + CO2 + CoA</text>
        <dbReference type="Rhea" id="RHEA:12080"/>
        <dbReference type="Rhea" id="RHEA-COMP:9623"/>
        <dbReference type="Rhea" id="RHEA-COMP:9625"/>
        <dbReference type="ChEBI" id="CHEBI:15378"/>
        <dbReference type="ChEBI" id="CHEBI:16526"/>
        <dbReference type="ChEBI" id="CHEBI:57287"/>
        <dbReference type="ChEBI" id="CHEBI:57288"/>
        <dbReference type="ChEBI" id="CHEBI:78449"/>
        <dbReference type="ChEBI" id="CHEBI:78450"/>
        <dbReference type="EC" id="2.3.1.180"/>
    </reaction>
</comment>
<comment type="pathway">
    <text evidence="1">Lipid metabolism; fatty acid biosynthesis.</text>
</comment>
<comment type="subunit">
    <text evidence="1">Homodimer.</text>
</comment>
<comment type="subcellular location">
    <subcellularLocation>
        <location evidence="1">Cytoplasm</location>
    </subcellularLocation>
</comment>
<comment type="domain">
    <text evidence="1">The last Arg residue of the ACP-binding site is essential for the weak association between ACP/AcpP and FabH.</text>
</comment>
<comment type="similarity">
    <text evidence="1">Belongs to the thiolase-like superfamily. FabH family.</text>
</comment>
<proteinExistence type="inferred from homology"/>
<protein>
    <recommendedName>
        <fullName evidence="1">Beta-ketoacyl-[acyl-carrier-protein] synthase III</fullName>
        <shortName evidence="1">Beta-ketoacyl-ACP synthase III</shortName>
        <shortName evidence="1">KAS III</shortName>
        <ecNumber evidence="1">2.3.1.180</ecNumber>
    </recommendedName>
    <alternativeName>
        <fullName evidence="1">3-oxoacyl-[acyl-carrier-protein] synthase 3</fullName>
    </alternativeName>
    <alternativeName>
        <fullName evidence="1">3-oxoacyl-[acyl-carrier-protein] synthase III</fullName>
    </alternativeName>
</protein>
<organism>
    <name type="scientific">Natranaerobius thermophilus (strain ATCC BAA-1301 / DSM 18059 / JW/NM-WN-LF)</name>
    <dbReference type="NCBI Taxonomy" id="457570"/>
    <lineage>
        <taxon>Bacteria</taxon>
        <taxon>Bacillati</taxon>
        <taxon>Bacillota</taxon>
        <taxon>Clostridia</taxon>
        <taxon>Natranaerobiales</taxon>
        <taxon>Natranaerobiaceae</taxon>
        <taxon>Natranaerobius</taxon>
    </lineage>
</organism>
<sequence length="329" mass="35308">MSNAKILATGKSVPDSIFTNEDLEKMVETSDSWITSRTGIKERRIADENTATSHLSVQAAEIALNKSGIEPADLDMIIVATVTPDMAFPSTACLVQDKLGADQACAFDLEAACTGFLYGLRIASQFIATDTHKYILVIGSETLSKIVDWEDRNTCVLFGDGAGAAVLGPVENGEEDKGLISFDLGADGSKGELLQQPAGGSLKPATLETVSSKEHFIKMNGNEVFKFAVKVIGDTTEKALKKIDKTTEDIDLFIPHQANQRIIDSATNRLGISKEKTFVNLQNYGNMSAASIPVALDEAIEENLIKEDDLVALVGFGGGLTWGSCLIKW</sequence>
<dbReference type="EC" id="2.3.1.180" evidence="1"/>
<dbReference type="EMBL" id="CP001034">
    <property type="protein sequence ID" value="ACB84940.1"/>
    <property type="molecule type" value="Genomic_DNA"/>
</dbReference>
<dbReference type="RefSeq" id="WP_012447815.1">
    <property type="nucleotide sequence ID" value="NC_010718.1"/>
</dbReference>
<dbReference type="SMR" id="B2A2M5"/>
<dbReference type="FunCoup" id="B2A2M5">
    <property type="interactions" value="392"/>
</dbReference>
<dbReference type="STRING" id="457570.Nther_1357"/>
<dbReference type="KEGG" id="nth:Nther_1357"/>
<dbReference type="eggNOG" id="COG0332">
    <property type="taxonomic scope" value="Bacteria"/>
</dbReference>
<dbReference type="HOGENOM" id="CLU_039592_3_1_9"/>
<dbReference type="InParanoid" id="B2A2M5"/>
<dbReference type="OrthoDB" id="9815506at2"/>
<dbReference type="UniPathway" id="UPA00094"/>
<dbReference type="Proteomes" id="UP000001683">
    <property type="component" value="Chromosome"/>
</dbReference>
<dbReference type="GO" id="GO:0005737">
    <property type="term" value="C:cytoplasm"/>
    <property type="evidence" value="ECO:0007669"/>
    <property type="project" value="UniProtKB-SubCell"/>
</dbReference>
<dbReference type="GO" id="GO:0004315">
    <property type="term" value="F:3-oxoacyl-[acyl-carrier-protein] synthase activity"/>
    <property type="evidence" value="ECO:0007669"/>
    <property type="project" value="InterPro"/>
</dbReference>
<dbReference type="GO" id="GO:0033818">
    <property type="term" value="F:beta-ketoacyl-acyl-carrier-protein synthase III activity"/>
    <property type="evidence" value="ECO:0007669"/>
    <property type="project" value="UniProtKB-UniRule"/>
</dbReference>
<dbReference type="GO" id="GO:0006633">
    <property type="term" value="P:fatty acid biosynthetic process"/>
    <property type="evidence" value="ECO:0007669"/>
    <property type="project" value="UniProtKB-UniRule"/>
</dbReference>
<dbReference type="CDD" id="cd00830">
    <property type="entry name" value="KAS_III"/>
    <property type="match status" value="1"/>
</dbReference>
<dbReference type="FunFam" id="3.40.47.10:FF:000004">
    <property type="entry name" value="3-oxoacyl-[acyl-carrier-protein] synthase 3"/>
    <property type="match status" value="1"/>
</dbReference>
<dbReference type="Gene3D" id="3.40.47.10">
    <property type="match status" value="1"/>
</dbReference>
<dbReference type="HAMAP" id="MF_01815">
    <property type="entry name" value="FabH"/>
    <property type="match status" value="1"/>
</dbReference>
<dbReference type="InterPro" id="IPR013747">
    <property type="entry name" value="ACP_syn_III_C"/>
</dbReference>
<dbReference type="InterPro" id="IPR013751">
    <property type="entry name" value="ACP_syn_III_N"/>
</dbReference>
<dbReference type="InterPro" id="IPR004655">
    <property type="entry name" value="FabH"/>
</dbReference>
<dbReference type="InterPro" id="IPR016039">
    <property type="entry name" value="Thiolase-like"/>
</dbReference>
<dbReference type="NCBIfam" id="TIGR00747">
    <property type="entry name" value="fabH"/>
    <property type="match status" value="1"/>
</dbReference>
<dbReference type="NCBIfam" id="NF006829">
    <property type="entry name" value="PRK09352.1"/>
    <property type="match status" value="1"/>
</dbReference>
<dbReference type="PANTHER" id="PTHR43091">
    <property type="entry name" value="3-OXOACYL-[ACYL-CARRIER-PROTEIN] SYNTHASE"/>
    <property type="match status" value="1"/>
</dbReference>
<dbReference type="PANTHER" id="PTHR43091:SF1">
    <property type="entry name" value="BETA-KETOACYL-[ACYL-CARRIER-PROTEIN] SYNTHASE III, CHLOROPLASTIC"/>
    <property type="match status" value="1"/>
</dbReference>
<dbReference type="Pfam" id="PF08545">
    <property type="entry name" value="ACP_syn_III"/>
    <property type="match status" value="1"/>
</dbReference>
<dbReference type="Pfam" id="PF08541">
    <property type="entry name" value="ACP_syn_III_C"/>
    <property type="match status" value="1"/>
</dbReference>
<dbReference type="SUPFAM" id="SSF53901">
    <property type="entry name" value="Thiolase-like"/>
    <property type="match status" value="1"/>
</dbReference>
<keyword id="KW-0012">Acyltransferase</keyword>
<keyword id="KW-0963">Cytoplasm</keyword>
<keyword id="KW-0275">Fatty acid biosynthesis</keyword>
<keyword id="KW-0276">Fatty acid metabolism</keyword>
<keyword id="KW-0444">Lipid biosynthesis</keyword>
<keyword id="KW-0443">Lipid metabolism</keyword>
<keyword id="KW-0511">Multifunctional enzyme</keyword>
<keyword id="KW-1185">Reference proteome</keyword>
<keyword id="KW-0808">Transferase</keyword>
<accession>B2A2M5</accession>
<reference key="1">
    <citation type="submission" date="2008-04" db="EMBL/GenBank/DDBJ databases">
        <title>Complete sequence of chromosome of Natranaerobius thermophilus JW/NM-WN-LF.</title>
        <authorList>
            <consortium name="US DOE Joint Genome Institute"/>
            <person name="Copeland A."/>
            <person name="Lucas S."/>
            <person name="Lapidus A."/>
            <person name="Glavina del Rio T."/>
            <person name="Dalin E."/>
            <person name="Tice H."/>
            <person name="Bruce D."/>
            <person name="Goodwin L."/>
            <person name="Pitluck S."/>
            <person name="Chertkov O."/>
            <person name="Brettin T."/>
            <person name="Detter J.C."/>
            <person name="Han C."/>
            <person name="Kuske C.R."/>
            <person name="Schmutz J."/>
            <person name="Larimer F."/>
            <person name="Land M."/>
            <person name="Hauser L."/>
            <person name="Kyrpides N."/>
            <person name="Lykidis A."/>
            <person name="Mesbah N.M."/>
            <person name="Wiegel J."/>
        </authorList>
    </citation>
    <scope>NUCLEOTIDE SEQUENCE [LARGE SCALE GENOMIC DNA]</scope>
    <source>
        <strain>ATCC BAA-1301 / DSM 18059 / JW/NM-WN-LF</strain>
    </source>
</reference>
<gene>
    <name evidence="1" type="primary">fabH</name>
    <name type="ordered locus">Nther_1357</name>
</gene>
<evidence type="ECO:0000255" key="1">
    <source>
        <dbReference type="HAMAP-Rule" id="MF_01815"/>
    </source>
</evidence>
<feature type="chain" id="PRO_1000187881" description="Beta-ketoacyl-[acyl-carrier-protein] synthase III">
    <location>
        <begin position="1"/>
        <end position="329"/>
    </location>
</feature>
<feature type="region of interest" description="ACP-binding" evidence="1">
    <location>
        <begin position="257"/>
        <end position="261"/>
    </location>
</feature>
<feature type="active site" evidence="1">
    <location>
        <position position="113"/>
    </location>
</feature>
<feature type="active site" evidence="1">
    <location>
        <position position="256"/>
    </location>
</feature>
<feature type="active site" evidence="1">
    <location>
        <position position="286"/>
    </location>
</feature>
<name>FABH_NATTJ</name>